<sequence>MYPPRRIEIPCKPGVYRFEDENGRILYVGKAKNLRNRLGSYFTNARRGRRISYMLSISKKVGWTCVADDIEALRLEYSWIKEFAPPCNVKLKDDKAYPFLAVTIGEQVPRLLITRRKIQYATHFGPYPKVFHLRETVSLLHKIFQIRTCSPTNYKRAIASGMPCFEGQINKCFGPCSLKTTHLQYQKRIKNLMAFLEGQSSSLLESLKKKMLKASKNKEYEEAAILRDKIQAAQTVLSRSAVLLDETVSADFIAVVSDNSIASVQCFRVIAGRIKSVYSWHFEQQEDQSASELLSQSIIQVYDKLSLPKRIVLFDKPSYLSALSAHLNDKNIDRSLEIEIVYHPNEQERRLLETVKDNALSELERHRLRRSSDYTERHRSLFELQKYLNLNSLPVRIECFDISHLLGTNTSGSMVVFENGEPKKSAYRHFNIHIDQNNDTASMFSLICRRLRSLESVAQDSPDYPHLMIIDGGKPQLSAAVGALQEVGLKIPVFALSKRLEELWSPGVKTSLILPPNSESLFLLQKIRDESHRFALKQQTRRREAYLTSELFRIPGLGKQKVMQLLRRFSSFAEIRQASIEDISALPGFGVKTAEKIKECAEAFSLK</sequence>
<accession>Q83MY6</accession>
<dbReference type="EMBL" id="AE014184">
    <property type="protein sequence ID" value="AAO44394.1"/>
    <property type="molecule type" value="Genomic_DNA"/>
</dbReference>
<dbReference type="RefSeq" id="WP_011102487.1">
    <property type="nucleotide sequence ID" value="NC_004572.3"/>
</dbReference>
<dbReference type="SMR" id="Q83MY6"/>
<dbReference type="STRING" id="203267.TWT_297"/>
<dbReference type="KEGG" id="twh:TWT_297"/>
<dbReference type="eggNOG" id="COG0322">
    <property type="taxonomic scope" value="Bacteria"/>
</dbReference>
<dbReference type="HOGENOM" id="CLU_014841_1_1_11"/>
<dbReference type="OrthoDB" id="9804933at2"/>
<dbReference type="Proteomes" id="UP000002200">
    <property type="component" value="Chromosome"/>
</dbReference>
<dbReference type="GO" id="GO:0005737">
    <property type="term" value="C:cytoplasm"/>
    <property type="evidence" value="ECO:0007669"/>
    <property type="project" value="UniProtKB-SubCell"/>
</dbReference>
<dbReference type="GO" id="GO:0009380">
    <property type="term" value="C:excinuclease repair complex"/>
    <property type="evidence" value="ECO:0007669"/>
    <property type="project" value="InterPro"/>
</dbReference>
<dbReference type="GO" id="GO:0003677">
    <property type="term" value="F:DNA binding"/>
    <property type="evidence" value="ECO:0007669"/>
    <property type="project" value="UniProtKB-UniRule"/>
</dbReference>
<dbReference type="GO" id="GO:0009381">
    <property type="term" value="F:excinuclease ABC activity"/>
    <property type="evidence" value="ECO:0007669"/>
    <property type="project" value="UniProtKB-UniRule"/>
</dbReference>
<dbReference type="GO" id="GO:0006289">
    <property type="term" value="P:nucleotide-excision repair"/>
    <property type="evidence" value="ECO:0007669"/>
    <property type="project" value="UniProtKB-UniRule"/>
</dbReference>
<dbReference type="GO" id="GO:0009432">
    <property type="term" value="P:SOS response"/>
    <property type="evidence" value="ECO:0007669"/>
    <property type="project" value="UniProtKB-UniRule"/>
</dbReference>
<dbReference type="CDD" id="cd10434">
    <property type="entry name" value="GIY-YIG_UvrC_Cho"/>
    <property type="match status" value="1"/>
</dbReference>
<dbReference type="FunFam" id="3.40.1440.10:FF:000001">
    <property type="entry name" value="UvrABC system protein C"/>
    <property type="match status" value="1"/>
</dbReference>
<dbReference type="Gene3D" id="1.10.150.20">
    <property type="entry name" value="5' to 3' exonuclease, C-terminal subdomain"/>
    <property type="match status" value="1"/>
</dbReference>
<dbReference type="Gene3D" id="3.40.1440.10">
    <property type="entry name" value="GIY-YIG endonuclease"/>
    <property type="match status" value="1"/>
</dbReference>
<dbReference type="Gene3D" id="4.10.860.10">
    <property type="entry name" value="UVR domain"/>
    <property type="match status" value="1"/>
</dbReference>
<dbReference type="Gene3D" id="3.30.420.340">
    <property type="entry name" value="UvrC, RNAse H endonuclease domain"/>
    <property type="match status" value="1"/>
</dbReference>
<dbReference type="HAMAP" id="MF_00203">
    <property type="entry name" value="UvrC"/>
    <property type="match status" value="1"/>
</dbReference>
<dbReference type="InterPro" id="IPR000305">
    <property type="entry name" value="GIY-YIG_endonuc"/>
</dbReference>
<dbReference type="InterPro" id="IPR035901">
    <property type="entry name" value="GIY-YIG_endonuc_sf"/>
</dbReference>
<dbReference type="InterPro" id="IPR047296">
    <property type="entry name" value="GIY-YIG_UvrC_Cho"/>
</dbReference>
<dbReference type="InterPro" id="IPR010994">
    <property type="entry name" value="RuvA_2-like"/>
</dbReference>
<dbReference type="InterPro" id="IPR001943">
    <property type="entry name" value="UVR_dom"/>
</dbReference>
<dbReference type="InterPro" id="IPR036876">
    <property type="entry name" value="UVR_dom_sf"/>
</dbReference>
<dbReference type="InterPro" id="IPR050066">
    <property type="entry name" value="UvrABC_protein_C"/>
</dbReference>
<dbReference type="InterPro" id="IPR004791">
    <property type="entry name" value="UvrC"/>
</dbReference>
<dbReference type="InterPro" id="IPR001162">
    <property type="entry name" value="UvrC_RNase_H_dom"/>
</dbReference>
<dbReference type="InterPro" id="IPR038476">
    <property type="entry name" value="UvrC_RNase_H_dom_sf"/>
</dbReference>
<dbReference type="NCBIfam" id="NF001824">
    <property type="entry name" value="PRK00558.1-5"/>
    <property type="match status" value="1"/>
</dbReference>
<dbReference type="NCBIfam" id="TIGR00194">
    <property type="entry name" value="uvrC"/>
    <property type="match status" value="1"/>
</dbReference>
<dbReference type="PANTHER" id="PTHR30562:SF1">
    <property type="entry name" value="UVRABC SYSTEM PROTEIN C"/>
    <property type="match status" value="1"/>
</dbReference>
<dbReference type="PANTHER" id="PTHR30562">
    <property type="entry name" value="UVRC/OXIDOREDUCTASE"/>
    <property type="match status" value="1"/>
</dbReference>
<dbReference type="Pfam" id="PF01541">
    <property type="entry name" value="GIY-YIG"/>
    <property type="match status" value="1"/>
</dbReference>
<dbReference type="Pfam" id="PF14520">
    <property type="entry name" value="HHH_5"/>
    <property type="match status" value="1"/>
</dbReference>
<dbReference type="Pfam" id="PF02151">
    <property type="entry name" value="UVR"/>
    <property type="match status" value="1"/>
</dbReference>
<dbReference type="Pfam" id="PF22920">
    <property type="entry name" value="UvrC_RNaseH"/>
    <property type="match status" value="1"/>
</dbReference>
<dbReference type="Pfam" id="PF08459">
    <property type="entry name" value="UvrC_RNaseH_dom"/>
    <property type="match status" value="1"/>
</dbReference>
<dbReference type="SMART" id="SM00465">
    <property type="entry name" value="GIYc"/>
    <property type="match status" value="1"/>
</dbReference>
<dbReference type="SUPFAM" id="SSF46600">
    <property type="entry name" value="C-terminal UvrC-binding domain of UvrB"/>
    <property type="match status" value="1"/>
</dbReference>
<dbReference type="SUPFAM" id="SSF82771">
    <property type="entry name" value="GIY-YIG endonuclease"/>
    <property type="match status" value="1"/>
</dbReference>
<dbReference type="SUPFAM" id="SSF47781">
    <property type="entry name" value="RuvA domain 2-like"/>
    <property type="match status" value="1"/>
</dbReference>
<dbReference type="PROSITE" id="PS50164">
    <property type="entry name" value="GIY_YIG"/>
    <property type="match status" value="1"/>
</dbReference>
<dbReference type="PROSITE" id="PS50151">
    <property type="entry name" value="UVR"/>
    <property type="match status" value="1"/>
</dbReference>
<dbReference type="PROSITE" id="PS50165">
    <property type="entry name" value="UVRC"/>
    <property type="match status" value="1"/>
</dbReference>
<gene>
    <name evidence="1" type="primary">uvrC</name>
    <name type="synonym">twt297</name>
    <name type="ordered locus">TWT_297</name>
</gene>
<comment type="function">
    <text evidence="1">The UvrABC repair system catalyzes the recognition and processing of DNA lesions. UvrC both incises the 5' and 3' sides of the lesion. The N-terminal half is responsible for the 3' incision and the C-terminal half is responsible for the 5' incision.</text>
</comment>
<comment type="subunit">
    <text evidence="1">Interacts with UvrB in an incision complex.</text>
</comment>
<comment type="subcellular location">
    <subcellularLocation>
        <location evidence="1">Cytoplasm</location>
    </subcellularLocation>
</comment>
<comment type="similarity">
    <text evidence="1">Belongs to the UvrC family.</text>
</comment>
<evidence type="ECO:0000255" key="1">
    <source>
        <dbReference type="HAMAP-Rule" id="MF_00203"/>
    </source>
</evidence>
<feature type="chain" id="PRO_0000264975" description="UvrABC system protein C">
    <location>
        <begin position="1"/>
        <end position="607"/>
    </location>
</feature>
<feature type="domain" description="GIY-YIG" evidence="1">
    <location>
        <begin position="11"/>
        <end position="89"/>
    </location>
</feature>
<feature type="domain" description="UVR" evidence="1">
    <location>
        <begin position="201"/>
        <end position="236"/>
    </location>
</feature>
<proteinExistence type="inferred from homology"/>
<organism>
    <name type="scientific">Tropheryma whipplei (strain Twist)</name>
    <name type="common">Whipple's bacillus</name>
    <dbReference type="NCBI Taxonomy" id="203267"/>
    <lineage>
        <taxon>Bacteria</taxon>
        <taxon>Bacillati</taxon>
        <taxon>Actinomycetota</taxon>
        <taxon>Actinomycetes</taxon>
        <taxon>Micrococcales</taxon>
        <taxon>Tropherymataceae</taxon>
        <taxon>Tropheryma</taxon>
    </lineage>
</organism>
<name>UVRC_TROWT</name>
<protein>
    <recommendedName>
        <fullName evidence="1">UvrABC system protein C</fullName>
        <shortName evidence="1">Protein UvrC</shortName>
    </recommendedName>
    <alternativeName>
        <fullName evidence="1">Excinuclease ABC subunit C</fullName>
    </alternativeName>
</protein>
<keyword id="KW-0963">Cytoplasm</keyword>
<keyword id="KW-0227">DNA damage</keyword>
<keyword id="KW-0228">DNA excision</keyword>
<keyword id="KW-0234">DNA repair</keyword>
<keyword id="KW-0267">Excision nuclease</keyword>
<keyword id="KW-1185">Reference proteome</keyword>
<keyword id="KW-0742">SOS response</keyword>
<reference key="1">
    <citation type="journal article" date="2003" name="Genome Res.">
        <title>Tropheryma whipplei twist: a human pathogenic Actinobacteria with a reduced genome.</title>
        <authorList>
            <person name="Raoult D."/>
            <person name="Ogata H."/>
            <person name="Audic S."/>
            <person name="Robert C."/>
            <person name="Suhre K."/>
            <person name="Drancourt M."/>
            <person name="Claverie J.-M."/>
        </authorList>
    </citation>
    <scope>NUCLEOTIDE SEQUENCE [LARGE SCALE GENOMIC DNA]</scope>
    <source>
        <strain>Twist</strain>
    </source>
</reference>